<evidence type="ECO:0000255" key="1">
    <source>
        <dbReference type="HAMAP-Rule" id="MF_00377"/>
    </source>
</evidence>
<evidence type="ECO:0000256" key="2">
    <source>
        <dbReference type="SAM" id="MobiDB-lite"/>
    </source>
</evidence>
<reference key="1">
    <citation type="journal article" date="2014" name="Stand. Genomic Sci.">
        <title>Complete genome sequence of Burkholderia phymatum STM815(T), a broad host range and efficient nitrogen-fixing symbiont of Mimosa species.</title>
        <authorList>
            <person name="Moulin L."/>
            <person name="Klonowska A."/>
            <person name="Caroline B."/>
            <person name="Booth K."/>
            <person name="Vriezen J.A."/>
            <person name="Melkonian R."/>
            <person name="James E.K."/>
            <person name="Young J.P."/>
            <person name="Bena G."/>
            <person name="Hauser L."/>
            <person name="Land M."/>
            <person name="Kyrpides N."/>
            <person name="Bruce D."/>
            <person name="Chain P."/>
            <person name="Copeland A."/>
            <person name="Pitluck S."/>
            <person name="Woyke T."/>
            <person name="Lizotte-Waniewski M."/>
            <person name="Bristow J."/>
            <person name="Riley M."/>
        </authorList>
    </citation>
    <scope>NUCLEOTIDE SEQUENCE [LARGE SCALE GENOMIC DNA]</scope>
    <source>
        <strain>DSM 17167 / CIP 108236 / LMG 21445 / STM815</strain>
    </source>
</reference>
<protein>
    <recommendedName>
        <fullName evidence="1">Chromosomal replication initiator protein DnaA</fullName>
    </recommendedName>
</protein>
<feature type="chain" id="PRO_1000121959" description="Chromosomal replication initiator protein DnaA">
    <location>
        <begin position="1"/>
        <end position="518"/>
    </location>
</feature>
<feature type="region of interest" description="Domain I, interacts with DnaA modulators" evidence="1">
    <location>
        <begin position="1"/>
        <end position="72"/>
    </location>
</feature>
<feature type="region of interest" description="Domain II" evidence="1">
    <location>
        <begin position="72"/>
        <end position="181"/>
    </location>
</feature>
<feature type="region of interest" description="Disordered" evidence="2">
    <location>
        <begin position="155"/>
        <end position="178"/>
    </location>
</feature>
<feature type="region of interest" description="Domain III, AAA+ region" evidence="1">
    <location>
        <begin position="182"/>
        <end position="398"/>
    </location>
</feature>
<feature type="region of interest" description="Domain IV, binds dsDNA" evidence="1">
    <location>
        <begin position="399"/>
        <end position="518"/>
    </location>
</feature>
<feature type="binding site" evidence="1">
    <location>
        <position position="226"/>
    </location>
    <ligand>
        <name>ATP</name>
        <dbReference type="ChEBI" id="CHEBI:30616"/>
    </ligand>
</feature>
<feature type="binding site" evidence="1">
    <location>
        <position position="228"/>
    </location>
    <ligand>
        <name>ATP</name>
        <dbReference type="ChEBI" id="CHEBI:30616"/>
    </ligand>
</feature>
<feature type="binding site" evidence="1">
    <location>
        <position position="229"/>
    </location>
    <ligand>
        <name>ATP</name>
        <dbReference type="ChEBI" id="CHEBI:30616"/>
    </ligand>
</feature>
<feature type="binding site" evidence="1">
    <location>
        <position position="230"/>
    </location>
    <ligand>
        <name>ATP</name>
        <dbReference type="ChEBI" id="CHEBI:30616"/>
    </ligand>
</feature>
<gene>
    <name evidence="1" type="primary">dnaA</name>
    <name type="ordered locus">Bphy_0001</name>
</gene>
<proteinExistence type="inferred from homology"/>
<dbReference type="EMBL" id="CP001043">
    <property type="protein sequence ID" value="ACC69198.1"/>
    <property type="molecule type" value="Genomic_DNA"/>
</dbReference>
<dbReference type="RefSeq" id="WP_012399429.1">
    <property type="nucleotide sequence ID" value="NC_010622.1"/>
</dbReference>
<dbReference type="SMR" id="B2JJ97"/>
<dbReference type="STRING" id="391038.Bphy_0001"/>
<dbReference type="KEGG" id="bph:Bphy_0001"/>
<dbReference type="eggNOG" id="COG0593">
    <property type="taxonomic scope" value="Bacteria"/>
</dbReference>
<dbReference type="HOGENOM" id="CLU_026910_0_1_4"/>
<dbReference type="Proteomes" id="UP000001192">
    <property type="component" value="Chromosome 1"/>
</dbReference>
<dbReference type="GO" id="GO:0005737">
    <property type="term" value="C:cytoplasm"/>
    <property type="evidence" value="ECO:0007669"/>
    <property type="project" value="UniProtKB-SubCell"/>
</dbReference>
<dbReference type="GO" id="GO:0005886">
    <property type="term" value="C:plasma membrane"/>
    <property type="evidence" value="ECO:0007669"/>
    <property type="project" value="TreeGrafter"/>
</dbReference>
<dbReference type="GO" id="GO:0005524">
    <property type="term" value="F:ATP binding"/>
    <property type="evidence" value="ECO:0007669"/>
    <property type="project" value="UniProtKB-UniRule"/>
</dbReference>
<dbReference type="GO" id="GO:0016887">
    <property type="term" value="F:ATP hydrolysis activity"/>
    <property type="evidence" value="ECO:0007669"/>
    <property type="project" value="InterPro"/>
</dbReference>
<dbReference type="GO" id="GO:0003688">
    <property type="term" value="F:DNA replication origin binding"/>
    <property type="evidence" value="ECO:0007669"/>
    <property type="project" value="UniProtKB-UniRule"/>
</dbReference>
<dbReference type="GO" id="GO:0008289">
    <property type="term" value="F:lipid binding"/>
    <property type="evidence" value="ECO:0007669"/>
    <property type="project" value="UniProtKB-KW"/>
</dbReference>
<dbReference type="GO" id="GO:0006270">
    <property type="term" value="P:DNA replication initiation"/>
    <property type="evidence" value="ECO:0007669"/>
    <property type="project" value="UniProtKB-UniRule"/>
</dbReference>
<dbReference type="GO" id="GO:0006275">
    <property type="term" value="P:regulation of DNA replication"/>
    <property type="evidence" value="ECO:0007669"/>
    <property type="project" value="UniProtKB-UniRule"/>
</dbReference>
<dbReference type="CDD" id="cd00009">
    <property type="entry name" value="AAA"/>
    <property type="match status" value="1"/>
</dbReference>
<dbReference type="CDD" id="cd06571">
    <property type="entry name" value="Bac_DnaA_C"/>
    <property type="match status" value="1"/>
</dbReference>
<dbReference type="FunFam" id="1.10.8.60:FF:000003">
    <property type="entry name" value="Chromosomal replication initiator protein DnaA"/>
    <property type="match status" value="1"/>
</dbReference>
<dbReference type="FunFam" id="3.40.50.300:FF:000668">
    <property type="entry name" value="Chromosomal replication initiator protein DnaA"/>
    <property type="match status" value="1"/>
</dbReference>
<dbReference type="Gene3D" id="1.10.1750.10">
    <property type="match status" value="1"/>
</dbReference>
<dbReference type="Gene3D" id="1.10.8.60">
    <property type="match status" value="1"/>
</dbReference>
<dbReference type="Gene3D" id="3.30.300.180">
    <property type="match status" value="1"/>
</dbReference>
<dbReference type="Gene3D" id="3.40.50.300">
    <property type="entry name" value="P-loop containing nucleotide triphosphate hydrolases"/>
    <property type="match status" value="1"/>
</dbReference>
<dbReference type="HAMAP" id="MF_00377">
    <property type="entry name" value="DnaA_bact"/>
    <property type="match status" value="1"/>
</dbReference>
<dbReference type="InterPro" id="IPR003593">
    <property type="entry name" value="AAA+_ATPase"/>
</dbReference>
<dbReference type="InterPro" id="IPR001957">
    <property type="entry name" value="Chromosome_initiator_DnaA"/>
</dbReference>
<dbReference type="InterPro" id="IPR020591">
    <property type="entry name" value="Chromosome_initiator_DnaA-like"/>
</dbReference>
<dbReference type="InterPro" id="IPR018312">
    <property type="entry name" value="Chromosome_initiator_DnaA_CS"/>
</dbReference>
<dbReference type="InterPro" id="IPR013159">
    <property type="entry name" value="DnaA_C"/>
</dbReference>
<dbReference type="InterPro" id="IPR013317">
    <property type="entry name" value="DnaA_dom"/>
</dbReference>
<dbReference type="InterPro" id="IPR024633">
    <property type="entry name" value="DnaA_N_dom"/>
</dbReference>
<dbReference type="InterPro" id="IPR038454">
    <property type="entry name" value="DnaA_N_sf"/>
</dbReference>
<dbReference type="InterPro" id="IPR055199">
    <property type="entry name" value="Hda_lid"/>
</dbReference>
<dbReference type="InterPro" id="IPR027417">
    <property type="entry name" value="P-loop_NTPase"/>
</dbReference>
<dbReference type="InterPro" id="IPR010921">
    <property type="entry name" value="Trp_repressor/repl_initiator"/>
</dbReference>
<dbReference type="NCBIfam" id="TIGR00362">
    <property type="entry name" value="DnaA"/>
    <property type="match status" value="1"/>
</dbReference>
<dbReference type="PANTHER" id="PTHR30050">
    <property type="entry name" value="CHROMOSOMAL REPLICATION INITIATOR PROTEIN DNAA"/>
    <property type="match status" value="1"/>
</dbReference>
<dbReference type="PANTHER" id="PTHR30050:SF2">
    <property type="entry name" value="CHROMOSOMAL REPLICATION INITIATOR PROTEIN DNAA"/>
    <property type="match status" value="1"/>
</dbReference>
<dbReference type="Pfam" id="PF00308">
    <property type="entry name" value="Bac_DnaA"/>
    <property type="match status" value="1"/>
</dbReference>
<dbReference type="Pfam" id="PF08299">
    <property type="entry name" value="Bac_DnaA_C"/>
    <property type="match status" value="1"/>
</dbReference>
<dbReference type="Pfam" id="PF11638">
    <property type="entry name" value="DnaA_N"/>
    <property type="match status" value="1"/>
</dbReference>
<dbReference type="Pfam" id="PF22688">
    <property type="entry name" value="Hda_lid"/>
    <property type="match status" value="1"/>
</dbReference>
<dbReference type="PRINTS" id="PR00051">
    <property type="entry name" value="DNAA"/>
</dbReference>
<dbReference type="SMART" id="SM00382">
    <property type="entry name" value="AAA"/>
    <property type="match status" value="1"/>
</dbReference>
<dbReference type="SMART" id="SM00760">
    <property type="entry name" value="Bac_DnaA_C"/>
    <property type="match status" value="1"/>
</dbReference>
<dbReference type="SUPFAM" id="SSF52540">
    <property type="entry name" value="P-loop containing nucleoside triphosphate hydrolases"/>
    <property type="match status" value="1"/>
</dbReference>
<dbReference type="SUPFAM" id="SSF48295">
    <property type="entry name" value="TrpR-like"/>
    <property type="match status" value="1"/>
</dbReference>
<dbReference type="PROSITE" id="PS01008">
    <property type="entry name" value="DNAA"/>
    <property type="match status" value="1"/>
</dbReference>
<keyword id="KW-0067">ATP-binding</keyword>
<keyword id="KW-0963">Cytoplasm</keyword>
<keyword id="KW-0235">DNA replication</keyword>
<keyword id="KW-0238">DNA-binding</keyword>
<keyword id="KW-0446">Lipid-binding</keyword>
<keyword id="KW-0547">Nucleotide-binding</keyword>
<keyword id="KW-1185">Reference proteome</keyword>
<name>DNAA_PARP8</name>
<sequence length="518" mass="57212">MNEFWQHCSALLERELTPQQYVTWIKPLAPVAFDADANTLSIAAPNRFKLDWVKSQFSGRITDLARDFWHSPVDVQFVLDPKAGMRTAPAAPSRPPSAGVRNAAAAVDAAVGAVQAAHSARGGGMPGLGMPTNAAQLTDDAADLDLPSLDANEAAAARRTWRPGAAAQAAGGESDSTYERSKLNPVLTFDNFVTGKANQLARAAAIQVADNPGISYNPLFLYGGVGLGKTHLIHAIGNQLLMDKPGARIRYIHAEQYVSDVVKAYQRKAFDDFKRYYHSLDLLLIDDIQFFSGKSRTQEEFFYAFEALVANKAQVIITSDTYPKEISGIDDRLISRFDSGLTVAIEPPELEMRVAILMRKAQSEGVNLNEDVAFFVAKHLRSNVRELEGALRKILAYSKFHGREITIELTKEALKDLLTVQNRQISVENIQKTVADFYSIKVADMYSKKRPANIARPRQIAMYLAKELTQKSLPEIGELFGGRDHTTVLHAVRKIADERGKDAQLNHELHVLEQTLKG</sequence>
<accession>B2JJ97</accession>
<comment type="function">
    <text evidence="1">Plays an essential role in the initiation and regulation of chromosomal replication. ATP-DnaA binds to the origin of replication (oriC) to initiate formation of the DNA replication initiation complex once per cell cycle. Binds the DnaA box (a 9 base pair repeat at the origin) and separates the double-stranded (ds)DNA. Forms a right-handed helical filament on oriC DNA; dsDNA binds to the exterior of the filament while single-stranded (ss)DNA is stabiized in the filament's interior. The ATP-DnaA-oriC complex binds and stabilizes one strand of the AT-rich DNA unwinding element (DUE), permitting loading of DNA polymerase. After initiation quickly degrades to an ADP-DnaA complex that is not apt for DNA replication. Binds acidic phospholipids.</text>
</comment>
<comment type="subunit">
    <text evidence="1">Oligomerizes as a right-handed, spiral filament on DNA at oriC.</text>
</comment>
<comment type="subcellular location">
    <subcellularLocation>
        <location evidence="1">Cytoplasm</location>
    </subcellularLocation>
</comment>
<comment type="domain">
    <text evidence="1">Domain I is involved in oligomerization and binding regulators, domain II is flexibile and of varying length in different bacteria, domain III forms the AAA+ region, while domain IV binds dsDNA.</text>
</comment>
<comment type="similarity">
    <text evidence="1">Belongs to the DnaA family.</text>
</comment>
<organism>
    <name type="scientific">Paraburkholderia phymatum (strain DSM 17167 / CIP 108236 / LMG 21445 / STM815)</name>
    <name type="common">Burkholderia phymatum</name>
    <dbReference type="NCBI Taxonomy" id="391038"/>
    <lineage>
        <taxon>Bacteria</taxon>
        <taxon>Pseudomonadati</taxon>
        <taxon>Pseudomonadota</taxon>
        <taxon>Betaproteobacteria</taxon>
        <taxon>Burkholderiales</taxon>
        <taxon>Burkholderiaceae</taxon>
        <taxon>Paraburkholderia</taxon>
    </lineage>
</organism>